<evidence type="ECO:0000255" key="1">
    <source>
        <dbReference type="HAMAP-Rule" id="MF_01342"/>
    </source>
</evidence>
<evidence type="ECO:0000305" key="2"/>
<reference key="1">
    <citation type="journal article" date="2000" name="Nature">
        <title>Genome sequence of the endocellular bacterial symbiont of aphids Buchnera sp. APS.</title>
        <authorList>
            <person name="Shigenobu S."/>
            <person name="Watanabe H."/>
            <person name="Hattori M."/>
            <person name="Sakaki Y."/>
            <person name="Ishikawa H."/>
        </authorList>
    </citation>
    <scope>NUCLEOTIDE SEQUENCE [LARGE SCALE GENOMIC DNA]</scope>
    <source>
        <strain>APS</strain>
    </source>
</reference>
<name>RL16_BUCAI</name>
<comment type="function">
    <text evidence="1">Binds 23S rRNA and is also seen to make contacts with the A and possibly P site tRNAs.</text>
</comment>
<comment type="subunit">
    <text evidence="1">Part of the 50S ribosomal subunit.</text>
</comment>
<comment type="similarity">
    <text evidence="1">Belongs to the universal ribosomal protein uL16 family.</text>
</comment>
<protein>
    <recommendedName>
        <fullName evidence="1">Large ribosomal subunit protein uL16</fullName>
    </recommendedName>
    <alternativeName>
        <fullName evidence="2">50S ribosomal protein L16</fullName>
    </alternativeName>
</protein>
<gene>
    <name evidence="1" type="primary">rplP</name>
    <name type="ordered locus">BU517</name>
</gene>
<dbReference type="EMBL" id="BA000003">
    <property type="protein sequence ID" value="BAB13210.1"/>
    <property type="molecule type" value="Genomic_DNA"/>
</dbReference>
<dbReference type="RefSeq" id="NP_240324.1">
    <property type="nucleotide sequence ID" value="NC_002528.1"/>
</dbReference>
<dbReference type="RefSeq" id="WP_009874468.1">
    <property type="nucleotide sequence ID" value="NZ_AP036055.1"/>
</dbReference>
<dbReference type="SMR" id="P57584"/>
<dbReference type="STRING" id="563178.BUAP5A_510"/>
<dbReference type="EnsemblBacteria" id="BAB13210">
    <property type="protein sequence ID" value="BAB13210"/>
    <property type="gene ID" value="BAB13210"/>
</dbReference>
<dbReference type="KEGG" id="buc:BU517"/>
<dbReference type="PATRIC" id="fig|107806.10.peg.522"/>
<dbReference type="eggNOG" id="COG0197">
    <property type="taxonomic scope" value="Bacteria"/>
</dbReference>
<dbReference type="HOGENOM" id="CLU_078858_2_1_6"/>
<dbReference type="Proteomes" id="UP000001806">
    <property type="component" value="Chromosome"/>
</dbReference>
<dbReference type="GO" id="GO:0022625">
    <property type="term" value="C:cytosolic large ribosomal subunit"/>
    <property type="evidence" value="ECO:0007669"/>
    <property type="project" value="TreeGrafter"/>
</dbReference>
<dbReference type="GO" id="GO:0019843">
    <property type="term" value="F:rRNA binding"/>
    <property type="evidence" value="ECO:0007669"/>
    <property type="project" value="UniProtKB-UniRule"/>
</dbReference>
<dbReference type="GO" id="GO:0003735">
    <property type="term" value="F:structural constituent of ribosome"/>
    <property type="evidence" value="ECO:0007669"/>
    <property type="project" value="InterPro"/>
</dbReference>
<dbReference type="GO" id="GO:0000049">
    <property type="term" value="F:tRNA binding"/>
    <property type="evidence" value="ECO:0007669"/>
    <property type="project" value="UniProtKB-KW"/>
</dbReference>
<dbReference type="GO" id="GO:0006412">
    <property type="term" value="P:translation"/>
    <property type="evidence" value="ECO:0007669"/>
    <property type="project" value="UniProtKB-UniRule"/>
</dbReference>
<dbReference type="CDD" id="cd01433">
    <property type="entry name" value="Ribosomal_L16_L10e"/>
    <property type="match status" value="1"/>
</dbReference>
<dbReference type="FunFam" id="3.90.1170.10:FF:000001">
    <property type="entry name" value="50S ribosomal protein L16"/>
    <property type="match status" value="1"/>
</dbReference>
<dbReference type="Gene3D" id="3.90.1170.10">
    <property type="entry name" value="Ribosomal protein L10e/L16"/>
    <property type="match status" value="1"/>
</dbReference>
<dbReference type="HAMAP" id="MF_01342">
    <property type="entry name" value="Ribosomal_uL16"/>
    <property type="match status" value="1"/>
</dbReference>
<dbReference type="InterPro" id="IPR047873">
    <property type="entry name" value="Ribosomal_uL16"/>
</dbReference>
<dbReference type="InterPro" id="IPR000114">
    <property type="entry name" value="Ribosomal_uL16_bact-type"/>
</dbReference>
<dbReference type="InterPro" id="IPR020798">
    <property type="entry name" value="Ribosomal_uL16_CS"/>
</dbReference>
<dbReference type="InterPro" id="IPR016180">
    <property type="entry name" value="Ribosomal_uL16_dom"/>
</dbReference>
<dbReference type="InterPro" id="IPR036920">
    <property type="entry name" value="Ribosomal_uL16_sf"/>
</dbReference>
<dbReference type="NCBIfam" id="TIGR01164">
    <property type="entry name" value="rplP_bact"/>
    <property type="match status" value="1"/>
</dbReference>
<dbReference type="PANTHER" id="PTHR12220">
    <property type="entry name" value="50S/60S RIBOSOMAL PROTEIN L16"/>
    <property type="match status" value="1"/>
</dbReference>
<dbReference type="PANTHER" id="PTHR12220:SF13">
    <property type="entry name" value="LARGE RIBOSOMAL SUBUNIT PROTEIN UL16M"/>
    <property type="match status" value="1"/>
</dbReference>
<dbReference type="Pfam" id="PF00252">
    <property type="entry name" value="Ribosomal_L16"/>
    <property type="match status" value="1"/>
</dbReference>
<dbReference type="PRINTS" id="PR00060">
    <property type="entry name" value="RIBOSOMALL16"/>
</dbReference>
<dbReference type="SUPFAM" id="SSF54686">
    <property type="entry name" value="Ribosomal protein L16p/L10e"/>
    <property type="match status" value="1"/>
</dbReference>
<dbReference type="PROSITE" id="PS00586">
    <property type="entry name" value="RIBOSOMAL_L16_1"/>
    <property type="match status" value="1"/>
</dbReference>
<dbReference type="PROSITE" id="PS00701">
    <property type="entry name" value="RIBOSOMAL_L16_2"/>
    <property type="match status" value="1"/>
</dbReference>
<organism>
    <name type="scientific">Buchnera aphidicola subsp. Acyrthosiphon pisum (strain APS)</name>
    <name type="common">Acyrthosiphon pisum symbiotic bacterium</name>
    <dbReference type="NCBI Taxonomy" id="107806"/>
    <lineage>
        <taxon>Bacteria</taxon>
        <taxon>Pseudomonadati</taxon>
        <taxon>Pseudomonadota</taxon>
        <taxon>Gammaproteobacteria</taxon>
        <taxon>Enterobacterales</taxon>
        <taxon>Erwiniaceae</taxon>
        <taxon>Buchnera</taxon>
    </lineage>
</organism>
<sequence>MLQPKRTKFRKMHKGRNRGLASGTDINFGTFGLQAIDRGRLTARQIESARRAITRCIKRQGKMWIRIFPDKPITQKPLEVRMGKGKGNVEYWVALVQPGKILYELEGVTEEESRAAFKLAAAKLPIKTTFVNKMVM</sequence>
<proteinExistence type="inferred from homology"/>
<feature type="chain" id="PRO_0000062065" description="Large ribosomal subunit protein uL16">
    <location>
        <begin position="1"/>
        <end position="136"/>
    </location>
</feature>
<keyword id="KW-1185">Reference proteome</keyword>
<keyword id="KW-0687">Ribonucleoprotein</keyword>
<keyword id="KW-0689">Ribosomal protein</keyword>
<keyword id="KW-0694">RNA-binding</keyword>
<keyword id="KW-0699">rRNA-binding</keyword>
<keyword id="KW-0820">tRNA-binding</keyword>
<accession>P57584</accession>